<comment type="subcellular location">
    <subcellularLocation>
        <location evidence="2">Mitochondrion</location>
    </subcellularLocation>
</comment>
<comment type="disruption phenotype">
    <text evidence="4">Increases frequency of mitochondrial genome loss.</text>
</comment>
<comment type="miscellaneous">
    <text evidence="3">Present with 2290 molecules/cell in log phase SD medium.</text>
</comment>
<comment type="similarity">
    <text evidence="5">Belongs to the AIM24 family.</text>
</comment>
<gene>
    <name type="primary">AIM24</name>
    <name type="synonym">FMP26</name>
    <name type="ordered locus">YJR080C</name>
    <name type="ORF">J1847</name>
</gene>
<accession>P47127</accession>
<accession>D6VWQ0</accession>
<reference key="1">
    <citation type="journal article" date="1996" name="Yeast">
        <title>Analysis of a 62 kb DNA sequence of chromosome X reveals 36 open reading frames and a gene cluster with a counterpart on chromosome XI.</title>
        <authorList>
            <person name="Huang M.-E."/>
            <person name="Manus V."/>
            <person name="Chuat J.-C."/>
            <person name="Galibert F."/>
        </authorList>
    </citation>
    <scope>NUCLEOTIDE SEQUENCE [GENOMIC DNA]</scope>
    <source>
        <strain>ATCC 204508 / S288c</strain>
    </source>
</reference>
<reference key="2">
    <citation type="journal article" date="1996" name="EMBO J.">
        <title>Complete nucleotide sequence of Saccharomyces cerevisiae chromosome X.</title>
        <authorList>
            <person name="Galibert F."/>
            <person name="Alexandraki D."/>
            <person name="Baur A."/>
            <person name="Boles E."/>
            <person name="Chalwatzis N."/>
            <person name="Chuat J.-C."/>
            <person name="Coster F."/>
            <person name="Cziepluch C."/>
            <person name="de Haan M."/>
            <person name="Domdey H."/>
            <person name="Durand P."/>
            <person name="Entian K.-D."/>
            <person name="Gatius M."/>
            <person name="Goffeau A."/>
            <person name="Grivell L.A."/>
            <person name="Hennemann A."/>
            <person name="Herbert C.J."/>
            <person name="Heumann K."/>
            <person name="Hilger F."/>
            <person name="Hollenberg C.P."/>
            <person name="Huang M.-E."/>
            <person name="Jacq C."/>
            <person name="Jauniaux J.-C."/>
            <person name="Katsoulou C."/>
            <person name="Kirchrath L."/>
            <person name="Kleine K."/>
            <person name="Kordes E."/>
            <person name="Koetter P."/>
            <person name="Liebl S."/>
            <person name="Louis E.J."/>
            <person name="Manus V."/>
            <person name="Mewes H.-W."/>
            <person name="Miosga T."/>
            <person name="Obermaier B."/>
            <person name="Perea J."/>
            <person name="Pohl T.M."/>
            <person name="Portetelle D."/>
            <person name="Pujol A."/>
            <person name="Purnelle B."/>
            <person name="Ramezani Rad M."/>
            <person name="Rasmussen S.W."/>
            <person name="Rose M."/>
            <person name="Rossau R."/>
            <person name="Schaaff-Gerstenschlaeger I."/>
            <person name="Smits P.H.M."/>
            <person name="Scarcez T."/>
            <person name="Soriano N."/>
            <person name="To Van D."/>
            <person name="Tzermia M."/>
            <person name="Van Broekhoven A."/>
            <person name="Vandenbol M."/>
            <person name="Wedler H."/>
            <person name="von Wettstein D."/>
            <person name="Wambutt R."/>
            <person name="Zagulski M."/>
            <person name="Zollner A."/>
            <person name="Karpfinger-Hartl L."/>
        </authorList>
    </citation>
    <scope>NUCLEOTIDE SEQUENCE [LARGE SCALE GENOMIC DNA]</scope>
    <source>
        <strain>ATCC 204508 / S288c</strain>
    </source>
</reference>
<reference key="3">
    <citation type="journal article" date="2014" name="G3 (Bethesda)">
        <title>The reference genome sequence of Saccharomyces cerevisiae: Then and now.</title>
        <authorList>
            <person name="Engel S.R."/>
            <person name="Dietrich F.S."/>
            <person name="Fisk D.G."/>
            <person name="Binkley G."/>
            <person name="Balakrishnan R."/>
            <person name="Costanzo M.C."/>
            <person name="Dwight S.S."/>
            <person name="Hitz B.C."/>
            <person name="Karra K."/>
            <person name="Nash R.S."/>
            <person name="Weng S."/>
            <person name="Wong E.D."/>
            <person name="Lloyd P."/>
            <person name="Skrzypek M.S."/>
            <person name="Miyasato S.R."/>
            <person name="Simison M."/>
            <person name="Cherry J.M."/>
        </authorList>
    </citation>
    <scope>GENOME REANNOTATION</scope>
    <source>
        <strain>ATCC 204508 / S288c</strain>
    </source>
</reference>
<reference key="4">
    <citation type="journal article" date="2003" name="Nature">
        <title>Global analysis of protein localization in budding yeast.</title>
        <authorList>
            <person name="Huh W.-K."/>
            <person name="Falvo J.V."/>
            <person name="Gerke L.C."/>
            <person name="Carroll A.S."/>
            <person name="Howson R.W."/>
            <person name="Weissman J.S."/>
            <person name="O'Shea E.K."/>
        </authorList>
    </citation>
    <scope>SUBCELLULAR LOCATION [LARGE SCALE ANALYSIS]</scope>
</reference>
<reference key="5">
    <citation type="journal article" date="2003" name="Nature">
        <title>Global analysis of protein expression in yeast.</title>
        <authorList>
            <person name="Ghaemmaghami S."/>
            <person name="Huh W.-K."/>
            <person name="Bower K."/>
            <person name="Howson R.W."/>
            <person name="Belle A."/>
            <person name="Dephoure N."/>
            <person name="O'Shea E.K."/>
            <person name="Weissman J.S."/>
        </authorList>
    </citation>
    <scope>LEVEL OF PROTEIN EXPRESSION [LARGE SCALE ANALYSIS]</scope>
</reference>
<reference key="6">
    <citation type="journal article" date="2009" name="PLoS Genet.">
        <title>Computationally driven, quantitative experiments discover genes required for mitochondrial biogenesis.</title>
        <authorList>
            <person name="Hess D.C."/>
            <person name="Myers C.L."/>
            <person name="Huttenhower C."/>
            <person name="Hibbs M.A."/>
            <person name="Hayes A.P."/>
            <person name="Paw J."/>
            <person name="Clore J.J."/>
            <person name="Mendoza R.M."/>
            <person name="Luis B.S."/>
            <person name="Nislow C."/>
            <person name="Giaever G."/>
            <person name="Costanzo M."/>
            <person name="Troyanskaya O.G."/>
            <person name="Caudy A.A."/>
        </authorList>
    </citation>
    <scope>DISRUPTION PHENOTYPE</scope>
</reference>
<evidence type="ECO:0000255" key="1"/>
<evidence type="ECO:0000269" key="2">
    <source>
    </source>
</evidence>
<evidence type="ECO:0000269" key="3">
    <source>
    </source>
</evidence>
<evidence type="ECO:0000269" key="4">
    <source>
    </source>
</evidence>
<evidence type="ECO:0000305" key="5"/>
<sequence>MISPRVNTRVWQRSISLLSPQAAKTESNVVTKERTYIENLSKDIATSRFRLVDENGKIASITVQPDIPICIKKDCLVSIHNLNHLSLSYKWLNFWSNLIKFRSFKSSLFHRIIGSSVLEILAAPNFQTSRRPFDSSRSLSVLNLTGTKDWNVFGKDSIIAFEQNSSLEIKSPIFPSARSLVSNSSKSQLPRKFQILNGRGNVLVCGGGLVYSIELIDESDKILVNSRNILAINGQSQLDIANSVERQELHVEGAYVGDSSNDTVAPKFIKNQTLKSAYGHTVQFFKRMRSWIRNQYEKRYIYGVDSYFMKIKGPRTILIQTHEMTTSKDNILTKLTSKGHVKKSNVNDNGVNLEKQVANDVNSKIIELANRPSLFIATVSQDGRVDFQSTSKFT</sequence>
<name>AIM24_YEAST</name>
<organism>
    <name type="scientific">Saccharomyces cerevisiae (strain ATCC 204508 / S288c)</name>
    <name type="common">Baker's yeast</name>
    <dbReference type="NCBI Taxonomy" id="559292"/>
    <lineage>
        <taxon>Eukaryota</taxon>
        <taxon>Fungi</taxon>
        <taxon>Dikarya</taxon>
        <taxon>Ascomycota</taxon>
        <taxon>Saccharomycotina</taxon>
        <taxon>Saccharomycetes</taxon>
        <taxon>Saccharomycetales</taxon>
        <taxon>Saccharomycetaceae</taxon>
        <taxon>Saccharomyces</taxon>
    </lineage>
</organism>
<proteinExistence type="evidence at protein level"/>
<dbReference type="EMBL" id="Z49578">
    <property type="protein sequence ID" value="CAA89608.1"/>
    <property type="molecule type" value="Genomic_DNA"/>
</dbReference>
<dbReference type="EMBL" id="L47993">
    <property type="protein sequence ID" value="AAB39304.1"/>
    <property type="molecule type" value="Genomic_DNA"/>
</dbReference>
<dbReference type="EMBL" id="BK006943">
    <property type="protein sequence ID" value="DAA08866.1"/>
    <property type="molecule type" value="Genomic_DNA"/>
</dbReference>
<dbReference type="PIR" id="S57099">
    <property type="entry name" value="S57099"/>
</dbReference>
<dbReference type="RefSeq" id="NP_012614.1">
    <property type="nucleotide sequence ID" value="NM_001181738.1"/>
</dbReference>
<dbReference type="BioGRID" id="33836">
    <property type="interactions" value="93"/>
</dbReference>
<dbReference type="DIP" id="DIP-5206N"/>
<dbReference type="FunCoup" id="P47127">
    <property type="interactions" value="22"/>
</dbReference>
<dbReference type="IntAct" id="P47127">
    <property type="interactions" value="8"/>
</dbReference>
<dbReference type="STRING" id="4932.YJR080C"/>
<dbReference type="iPTMnet" id="P47127"/>
<dbReference type="PaxDb" id="4932-YJR080C"/>
<dbReference type="PeptideAtlas" id="P47127"/>
<dbReference type="EnsemblFungi" id="YJR080C_mRNA">
    <property type="protein sequence ID" value="YJR080C"/>
    <property type="gene ID" value="YJR080C"/>
</dbReference>
<dbReference type="GeneID" id="853543"/>
<dbReference type="KEGG" id="sce:YJR080C"/>
<dbReference type="AGR" id="SGD:S000003841"/>
<dbReference type="SGD" id="S000003841">
    <property type="gene designation" value="AIM24"/>
</dbReference>
<dbReference type="VEuPathDB" id="FungiDB:YJR080C"/>
<dbReference type="eggNOG" id="ENOG502RXC5">
    <property type="taxonomic scope" value="Eukaryota"/>
</dbReference>
<dbReference type="HOGENOM" id="CLU_057912_0_0_1"/>
<dbReference type="InParanoid" id="P47127"/>
<dbReference type="OMA" id="NGPYDLQ"/>
<dbReference type="OrthoDB" id="5295771at2759"/>
<dbReference type="BioCyc" id="YEAST:G3O-31709-MONOMER"/>
<dbReference type="BioGRID-ORCS" id="853543">
    <property type="hits" value="3 hits in 10 CRISPR screens"/>
</dbReference>
<dbReference type="PRO" id="PR:P47127"/>
<dbReference type="Proteomes" id="UP000002311">
    <property type="component" value="Chromosome X"/>
</dbReference>
<dbReference type="RNAct" id="P47127">
    <property type="molecule type" value="protein"/>
</dbReference>
<dbReference type="GO" id="GO:0005743">
    <property type="term" value="C:mitochondrial inner membrane"/>
    <property type="evidence" value="ECO:0000314"/>
    <property type="project" value="SGD"/>
</dbReference>
<dbReference type="GO" id="GO:0005739">
    <property type="term" value="C:mitochondrion"/>
    <property type="evidence" value="ECO:0007005"/>
    <property type="project" value="SGD"/>
</dbReference>
<dbReference type="GO" id="GO:0007007">
    <property type="term" value="P:inner mitochondrial membrane organization"/>
    <property type="evidence" value="ECO:0000315"/>
    <property type="project" value="SGD"/>
</dbReference>
<dbReference type="Gene3D" id="3.60.160.10">
    <property type="entry name" value="Mitochondrial biogenesis AIM24"/>
    <property type="match status" value="1"/>
</dbReference>
<dbReference type="InterPro" id="IPR002838">
    <property type="entry name" value="AIM24"/>
</dbReference>
<dbReference type="InterPro" id="IPR036983">
    <property type="entry name" value="AIM24_sf"/>
</dbReference>
<dbReference type="PANTHER" id="PTHR36959">
    <property type="entry name" value="ALTERED INHERITANCE OF MITOCHONDRIA PROTEIN 24, MITOCHONDRIAL"/>
    <property type="match status" value="1"/>
</dbReference>
<dbReference type="PANTHER" id="PTHR36959:SF2">
    <property type="entry name" value="ALTERED INHERITANCE OF MITOCHONDRIA PROTEIN 24, MITOCHONDRIAL"/>
    <property type="match status" value="1"/>
</dbReference>
<dbReference type="Pfam" id="PF01987">
    <property type="entry name" value="AIM24"/>
    <property type="match status" value="1"/>
</dbReference>
<keyword id="KW-0496">Mitochondrion</keyword>
<keyword id="KW-1185">Reference proteome</keyword>
<keyword id="KW-0809">Transit peptide</keyword>
<protein>
    <recommendedName>
        <fullName>Altered inheritance of mitochondria protein 24, mitochondrial</fullName>
    </recommendedName>
    <alternativeName>
        <fullName>Found in mitochondrial proteome protein 26</fullName>
    </alternativeName>
</protein>
<feature type="transit peptide" description="Mitochondrion" evidence="1">
    <location>
        <begin position="1"/>
        <end position="111"/>
    </location>
</feature>
<feature type="chain" id="PRO_0000203103" description="Altered inheritance of mitochondria protein 24, mitochondrial">
    <location>
        <begin position="112"/>
        <end position="394"/>
    </location>
</feature>